<sequence length="226" mass="24621">MSNRTFQRGDPIGHAFADPALLAQALRHRSAGTPHNERLEFLGDGIVNLLIAEALYHRWPKADEGALTRARAELVREGALAVIGRTLNLGERLTLGPGELKSGGHRRDSILADAVEAIVAAIYLDCGFERCRAVVLPWFEASLAALPVGKAEKDPKTRLQEWLQARQLPLPTYALISESGDEHAKQFHVACILEQPVARAEGQGTSRRLAEQQAATLVIAQLDSNT</sequence>
<reference key="1">
    <citation type="journal article" date="2002" name="Nature">
        <title>Comparison of the genomes of two Xanthomonas pathogens with differing host specificities.</title>
        <authorList>
            <person name="da Silva A.C.R."/>
            <person name="Ferro J.A."/>
            <person name="Reinach F.C."/>
            <person name="Farah C.S."/>
            <person name="Furlan L.R."/>
            <person name="Quaggio R.B."/>
            <person name="Monteiro-Vitorello C.B."/>
            <person name="Van Sluys M.A."/>
            <person name="Almeida N.F. Jr."/>
            <person name="Alves L.M.C."/>
            <person name="do Amaral A.M."/>
            <person name="Bertolini M.C."/>
            <person name="Camargo L.E.A."/>
            <person name="Camarotte G."/>
            <person name="Cannavan F."/>
            <person name="Cardozo J."/>
            <person name="Chambergo F."/>
            <person name="Ciapina L.P."/>
            <person name="Cicarelli R.M.B."/>
            <person name="Coutinho L.L."/>
            <person name="Cursino-Santos J.R."/>
            <person name="El-Dorry H."/>
            <person name="Faria J.B."/>
            <person name="Ferreira A.J.S."/>
            <person name="Ferreira R.C.C."/>
            <person name="Ferro M.I.T."/>
            <person name="Formighieri E.F."/>
            <person name="Franco M.C."/>
            <person name="Greggio C.C."/>
            <person name="Gruber A."/>
            <person name="Katsuyama A.M."/>
            <person name="Kishi L.T."/>
            <person name="Leite R.P."/>
            <person name="Lemos E.G.M."/>
            <person name="Lemos M.V.F."/>
            <person name="Locali E.C."/>
            <person name="Machado M.A."/>
            <person name="Madeira A.M.B.N."/>
            <person name="Martinez-Rossi N.M."/>
            <person name="Martins E.C."/>
            <person name="Meidanis J."/>
            <person name="Menck C.F.M."/>
            <person name="Miyaki C.Y."/>
            <person name="Moon D.H."/>
            <person name="Moreira L.M."/>
            <person name="Novo M.T.M."/>
            <person name="Okura V.K."/>
            <person name="Oliveira M.C."/>
            <person name="Oliveira V.R."/>
            <person name="Pereira H.A."/>
            <person name="Rossi A."/>
            <person name="Sena J.A.D."/>
            <person name="Silva C."/>
            <person name="de Souza R.F."/>
            <person name="Spinola L.A.F."/>
            <person name="Takita M.A."/>
            <person name="Tamura R.E."/>
            <person name="Teixeira E.C."/>
            <person name="Tezza R.I.D."/>
            <person name="Trindade dos Santos M."/>
            <person name="Truffi D."/>
            <person name="Tsai S.M."/>
            <person name="White F.F."/>
            <person name="Setubal J.C."/>
            <person name="Kitajima J.P."/>
        </authorList>
    </citation>
    <scope>NUCLEOTIDE SEQUENCE [LARGE SCALE GENOMIC DNA]</scope>
    <source>
        <strain>306</strain>
    </source>
</reference>
<name>RNC_XANAC</name>
<keyword id="KW-0963">Cytoplasm</keyword>
<keyword id="KW-0255">Endonuclease</keyword>
<keyword id="KW-0378">Hydrolase</keyword>
<keyword id="KW-0460">Magnesium</keyword>
<keyword id="KW-0479">Metal-binding</keyword>
<keyword id="KW-0507">mRNA processing</keyword>
<keyword id="KW-0540">Nuclease</keyword>
<keyword id="KW-0694">RNA-binding</keyword>
<keyword id="KW-0698">rRNA processing</keyword>
<keyword id="KW-0699">rRNA-binding</keyword>
<keyword id="KW-0819">tRNA processing</keyword>
<comment type="function">
    <text evidence="1">Digests double-stranded RNA. Involved in the processing of primary rRNA transcript to yield the immediate precursors to the large and small rRNAs (23S and 16S). Processes some mRNAs, and tRNAs when they are encoded in the rRNA operon. Processes pre-crRNA and tracrRNA of type II CRISPR loci if present in the organism.</text>
</comment>
<comment type="catalytic activity">
    <reaction evidence="1">
        <text>Endonucleolytic cleavage to 5'-phosphomonoester.</text>
        <dbReference type="EC" id="3.1.26.3"/>
    </reaction>
</comment>
<comment type="cofactor">
    <cofactor evidence="1">
        <name>Mg(2+)</name>
        <dbReference type="ChEBI" id="CHEBI:18420"/>
    </cofactor>
</comment>
<comment type="subunit">
    <text evidence="1">Homodimer.</text>
</comment>
<comment type="subcellular location">
    <subcellularLocation>
        <location evidence="1">Cytoplasm</location>
    </subcellularLocation>
</comment>
<comment type="similarity">
    <text evidence="1">Belongs to the ribonuclease III family.</text>
</comment>
<feature type="chain" id="PRO_0000180457" description="Ribonuclease 3">
    <location>
        <begin position="1"/>
        <end position="226"/>
    </location>
</feature>
<feature type="domain" description="RNase III" evidence="1">
    <location>
        <begin position="5"/>
        <end position="127"/>
    </location>
</feature>
<feature type="domain" description="DRBM" evidence="1">
    <location>
        <begin position="154"/>
        <end position="224"/>
    </location>
</feature>
<feature type="active site" evidence="1">
    <location>
        <position position="44"/>
    </location>
</feature>
<feature type="active site" evidence="1">
    <location>
        <position position="116"/>
    </location>
</feature>
<feature type="binding site" evidence="1">
    <location>
        <position position="40"/>
    </location>
    <ligand>
        <name>Mg(2+)</name>
        <dbReference type="ChEBI" id="CHEBI:18420"/>
    </ligand>
</feature>
<feature type="binding site" evidence="1">
    <location>
        <position position="113"/>
    </location>
    <ligand>
        <name>Mg(2+)</name>
        <dbReference type="ChEBI" id="CHEBI:18420"/>
    </ligand>
</feature>
<feature type="binding site" evidence="1">
    <location>
        <position position="116"/>
    </location>
    <ligand>
        <name>Mg(2+)</name>
        <dbReference type="ChEBI" id="CHEBI:18420"/>
    </ligand>
</feature>
<proteinExistence type="inferred from homology"/>
<evidence type="ECO:0000255" key="1">
    <source>
        <dbReference type="HAMAP-Rule" id="MF_00104"/>
    </source>
</evidence>
<organism>
    <name type="scientific">Xanthomonas axonopodis pv. citri (strain 306)</name>
    <dbReference type="NCBI Taxonomy" id="190486"/>
    <lineage>
        <taxon>Bacteria</taxon>
        <taxon>Pseudomonadati</taxon>
        <taxon>Pseudomonadota</taxon>
        <taxon>Gammaproteobacteria</taxon>
        <taxon>Lysobacterales</taxon>
        <taxon>Lysobacteraceae</taxon>
        <taxon>Xanthomonas</taxon>
    </lineage>
</organism>
<dbReference type="EC" id="3.1.26.3" evidence="1"/>
<dbReference type="EMBL" id="AE008923">
    <property type="protein sequence ID" value="AAM36196.1"/>
    <property type="molecule type" value="Genomic_DNA"/>
</dbReference>
<dbReference type="RefSeq" id="WP_003488212.1">
    <property type="nucleotide sequence ID" value="NC_003919.1"/>
</dbReference>
<dbReference type="SMR" id="Q8PMV0"/>
<dbReference type="GeneID" id="66910494"/>
<dbReference type="KEGG" id="xac:XAC1325"/>
<dbReference type="eggNOG" id="COG0571">
    <property type="taxonomic scope" value="Bacteria"/>
</dbReference>
<dbReference type="HOGENOM" id="CLU_000907_1_1_6"/>
<dbReference type="Proteomes" id="UP000000576">
    <property type="component" value="Chromosome"/>
</dbReference>
<dbReference type="GO" id="GO:0005737">
    <property type="term" value="C:cytoplasm"/>
    <property type="evidence" value="ECO:0007669"/>
    <property type="project" value="UniProtKB-SubCell"/>
</dbReference>
<dbReference type="GO" id="GO:0003725">
    <property type="term" value="F:double-stranded RNA binding"/>
    <property type="evidence" value="ECO:0007669"/>
    <property type="project" value="TreeGrafter"/>
</dbReference>
<dbReference type="GO" id="GO:0046872">
    <property type="term" value="F:metal ion binding"/>
    <property type="evidence" value="ECO:0007669"/>
    <property type="project" value="UniProtKB-KW"/>
</dbReference>
<dbReference type="GO" id="GO:0004525">
    <property type="term" value="F:ribonuclease III activity"/>
    <property type="evidence" value="ECO:0007669"/>
    <property type="project" value="UniProtKB-UniRule"/>
</dbReference>
<dbReference type="GO" id="GO:0019843">
    <property type="term" value="F:rRNA binding"/>
    <property type="evidence" value="ECO:0007669"/>
    <property type="project" value="UniProtKB-KW"/>
</dbReference>
<dbReference type="GO" id="GO:0006397">
    <property type="term" value="P:mRNA processing"/>
    <property type="evidence" value="ECO:0007669"/>
    <property type="project" value="UniProtKB-UniRule"/>
</dbReference>
<dbReference type="GO" id="GO:0010468">
    <property type="term" value="P:regulation of gene expression"/>
    <property type="evidence" value="ECO:0007669"/>
    <property type="project" value="TreeGrafter"/>
</dbReference>
<dbReference type="GO" id="GO:0006364">
    <property type="term" value="P:rRNA processing"/>
    <property type="evidence" value="ECO:0007669"/>
    <property type="project" value="UniProtKB-UniRule"/>
</dbReference>
<dbReference type="GO" id="GO:0008033">
    <property type="term" value="P:tRNA processing"/>
    <property type="evidence" value="ECO:0007669"/>
    <property type="project" value="UniProtKB-KW"/>
</dbReference>
<dbReference type="CDD" id="cd10845">
    <property type="entry name" value="DSRM_RNAse_III_family"/>
    <property type="match status" value="1"/>
</dbReference>
<dbReference type="CDD" id="cd00593">
    <property type="entry name" value="RIBOc"/>
    <property type="match status" value="1"/>
</dbReference>
<dbReference type="FunFam" id="1.10.1520.10:FF:000017">
    <property type="entry name" value="Ribonuclease 3"/>
    <property type="match status" value="1"/>
</dbReference>
<dbReference type="FunFam" id="3.30.160.20:FF:000003">
    <property type="entry name" value="Ribonuclease 3"/>
    <property type="match status" value="1"/>
</dbReference>
<dbReference type="Gene3D" id="3.30.160.20">
    <property type="match status" value="1"/>
</dbReference>
<dbReference type="Gene3D" id="1.10.1520.10">
    <property type="entry name" value="Ribonuclease III domain"/>
    <property type="match status" value="1"/>
</dbReference>
<dbReference type="HAMAP" id="MF_00104">
    <property type="entry name" value="RNase_III"/>
    <property type="match status" value="1"/>
</dbReference>
<dbReference type="InterPro" id="IPR014720">
    <property type="entry name" value="dsRBD_dom"/>
</dbReference>
<dbReference type="InterPro" id="IPR011907">
    <property type="entry name" value="RNase_III"/>
</dbReference>
<dbReference type="InterPro" id="IPR000999">
    <property type="entry name" value="RNase_III_dom"/>
</dbReference>
<dbReference type="InterPro" id="IPR036389">
    <property type="entry name" value="RNase_III_sf"/>
</dbReference>
<dbReference type="NCBIfam" id="TIGR02191">
    <property type="entry name" value="RNaseIII"/>
    <property type="match status" value="1"/>
</dbReference>
<dbReference type="PANTHER" id="PTHR11207:SF0">
    <property type="entry name" value="RIBONUCLEASE 3"/>
    <property type="match status" value="1"/>
</dbReference>
<dbReference type="PANTHER" id="PTHR11207">
    <property type="entry name" value="RIBONUCLEASE III"/>
    <property type="match status" value="1"/>
</dbReference>
<dbReference type="Pfam" id="PF00035">
    <property type="entry name" value="dsrm"/>
    <property type="match status" value="1"/>
</dbReference>
<dbReference type="Pfam" id="PF14622">
    <property type="entry name" value="Ribonucleas_3_3"/>
    <property type="match status" value="1"/>
</dbReference>
<dbReference type="SMART" id="SM00358">
    <property type="entry name" value="DSRM"/>
    <property type="match status" value="1"/>
</dbReference>
<dbReference type="SMART" id="SM00535">
    <property type="entry name" value="RIBOc"/>
    <property type="match status" value="1"/>
</dbReference>
<dbReference type="SUPFAM" id="SSF54768">
    <property type="entry name" value="dsRNA-binding domain-like"/>
    <property type="match status" value="1"/>
</dbReference>
<dbReference type="SUPFAM" id="SSF69065">
    <property type="entry name" value="RNase III domain-like"/>
    <property type="match status" value="1"/>
</dbReference>
<dbReference type="PROSITE" id="PS50137">
    <property type="entry name" value="DS_RBD"/>
    <property type="match status" value="1"/>
</dbReference>
<dbReference type="PROSITE" id="PS00517">
    <property type="entry name" value="RNASE_3_1"/>
    <property type="match status" value="1"/>
</dbReference>
<dbReference type="PROSITE" id="PS50142">
    <property type="entry name" value="RNASE_3_2"/>
    <property type="match status" value="1"/>
</dbReference>
<gene>
    <name evidence="1" type="primary">rnc</name>
    <name type="ordered locus">XAC1325</name>
</gene>
<protein>
    <recommendedName>
        <fullName evidence="1">Ribonuclease 3</fullName>
        <ecNumber evidence="1">3.1.26.3</ecNumber>
    </recommendedName>
    <alternativeName>
        <fullName evidence="1">Ribonuclease III</fullName>
        <shortName evidence="1">RNase III</shortName>
    </alternativeName>
</protein>
<accession>Q8PMV0</accession>